<evidence type="ECO:0000255" key="1">
    <source>
        <dbReference type="HAMAP-Rule" id="MF_01690"/>
    </source>
</evidence>
<organism>
    <name type="scientific">Pasteurella multocida (strain Pm70)</name>
    <dbReference type="NCBI Taxonomy" id="272843"/>
    <lineage>
        <taxon>Bacteria</taxon>
        <taxon>Pseudomonadati</taxon>
        <taxon>Pseudomonadota</taxon>
        <taxon>Gammaproteobacteria</taxon>
        <taxon>Pasteurellales</taxon>
        <taxon>Pasteurellaceae</taxon>
        <taxon>Pasteurella</taxon>
    </lineage>
</organism>
<dbReference type="EC" id="3.5.1.18" evidence="1"/>
<dbReference type="EMBL" id="AE004439">
    <property type="protein sequence ID" value="AAK03106.1"/>
    <property type="molecule type" value="Genomic_DNA"/>
</dbReference>
<dbReference type="RefSeq" id="WP_005754516.1">
    <property type="nucleotide sequence ID" value="NC_002663.1"/>
</dbReference>
<dbReference type="SMR" id="Q9CM22"/>
<dbReference type="STRING" id="272843.PM1022"/>
<dbReference type="EnsemblBacteria" id="AAK03106">
    <property type="protein sequence ID" value="AAK03106"/>
    <property type="gene ID" value="PM1022"/>
</dbReference>
<dbReference type="KEGG" id="pmu:PM1022"/>
<dbReference type="PATRIC" id="fig|272843.6.peg.1035"/>
<dbReference type="HOGENOM" id="CLU_021802_4_0_6"/>
<dbReference type="OrthoDB" id="9809784at2"/>
<dbReference type="UniPathway" id="UPA00034">
    <property type="reaction ID" value="UER00021"/>
</dbReference>
<dbReference type="Proteomes" id="UP000000809">
    <property type="component" value="Chromosome"/>
</dbReference>
<dbReference type="GO" id="GO:0008777">
    <property type="term" value="F:acetylornithine deacetylase activity"/>
    <property type="evidence" value="ECO:0007669"/>
    <property type="project" value="TreeGrafter"/>
</dbReference>
<dbReference type="GO" id="GO:0050897">
    <property type="term" value="F:cobalt ion binding"/>
    <property type="evidence" value="ECO:0007669"/>
    <property type="project" value="UniProtKB-UniRule"/>
</dbReference>
<dbReference type="GO" id="GO:0009014">
    <property type="term" value="F:succinyl-diaminopimelate desuccinylase activity"/>
    <property type="evidence" value="ECO:0007669"/>
    <property type="project" value="UniProtKB-UniRule"/>
</dbReference>
<dbReference type="GO" id="GO:0008270">
    <property type="term" value="F:zinc ion binding"/>
    <property type="evidence" value="ECO:0007669"/>
    <property type="project" value="UniProtKB-UniRule"/>
</dbReference>
<dbReference type="GO" id="GO:0019877">
    <property type="term" value="P:diaminopimelate biosynthetic process"/>
    <property type="evidence" value="ECO:0007669"/>
    <property type="project" value="UniProtKB-UniRule"/>
</dbReference>
<dbReference type="GO" id="GO:0006526">
    <property type="term" value="P:L-arginine biosynthetic process"/>
    <property type="evidence" value="ECO:0007669"/>
    <property type="project" value="TreeGrafter"/>
</dbReference>
<dbReference type="GO" id="GO:0009089">
    <property type="term" value="P:lysine biosynthetic process via diaminopimelate"/>
    <property type="evidence" value="ECO:0007669"/>
    <property type="project" value="UniProtKB-UniRule"/>
</dbReference>
<dbReference type="CDD" id="cd03891">
    <property type="entry name" value="M20_DapE_proteobac"/>
    <property type="match status" value="1"/>
</dbReference>
<dbReference type="FunFam" id="3.30.70.360:FF:000011">
    <property type="entry name" value="Succinyl-diaminopimelate desuccinylase"/>
    <property type="match status" value="1"/>
</dbReference>
<dbReference type="FunFam" id="3.40.630.10:FF:000005">
    <property type="entry name" value="Succinyl-diaminopimelate desuccinylase"/>
    <property type="match status" value="1"/>
</dbReference>
<dbReference type="Gene3D" id="3.40.630.10">
    <property type="entry name" value="Zn peptidases"/>
    <property type="match status" value="2"/>
</dbReference>
<dbReference type="HAMAP" id="MF_01690">
    <property type="entry name" value="DapE"/>
    <property type="match status" value="1"/>
</dbReference>
<dbReference type="InterPro" id="IPR001261">
    <property type="entry name" value="ArgE/DapE_CS"/>
</dbReference>
<dbReference type="InterPro" id="IPR036264">
    <property type="entry name" value="Bact_exopeptidase_dim_dom"/>
</dbReference>
<dbReference type="InterPro" id="IPR005941">
    <property type="entry name" value="DapE_proteobac"/>
</dbReference>
<dbReference type="InterPro" id="IPR002933">
    <property type="entry name" value="Peptidase_M20"/>
</dbReference>
<dbReference type="InterPro" id="IPR011650">
    <property type="entry name" value="Peptidase_M20_dimer"/>
</dbReference>
<dbReference type="InterPro" id="IPR050072">
    <property type="entry name" value="Peptidase_M20A"/>
</dbReference>
<dbReference type="NCBIfam" id="TIGR01246">
    <property type="entry name" value="dapE_proteo"/>
    <property type="match status" value="1"/>
</dbReference>
<dbReference type="NCBIfam" id="NF009557">
    <property type="entry name" value="PRK13009.1"/>
    <property type="match status" value="1"/>
</dbReference>
<dbReference type="PANTHER" id="PTHR43808">
    <property type="entry name" value="ACETYLORNITHINE DEACETYLASE"/>
    <property type="match status" value="1"/>
</dbReference>
<dbReference type="PANTHER" id="PTHR43808:SF31">
    <property type="entry name" value="N-ACETYL-L-CITRULLINE DEACETYLASE"/>
    <property type="match status" value="1"/>
</dbReference>
<dbReference type="Pfam" id="PF07687">
    <property type="entry name" value="M20_dimer"/>
    <property type="match status" value="1"/>
</dbReference>
<dbReference type="Pfam" id="PF01546">
    <property type="entry name" value="Peptidase_M20"/>
    <property type="match status" value="1"/>
</dbReference>
<dbReference type="SUPFAM" id="SSF55031">
    <property type="entry name" value="Bacterial exopeptidase dimerisation domain"/>
    <property type="match status" value="1"/>
</dbReference>
<dbReference type="SUPFAM" id="SSF53187">
    <property type="entry name" value="Zn-dependent exopeptidases"/>
    <property type="match status" value="1"/>
</dbReference>
<dbReference type="PROSITE" id="PS00758">
    <property type="entry name" value="ARGE_DAPE_CPG2_1"/>
    <property type="match status" value="1"/>
</dbReference>
<protein>
    <recommendedName>
        <fullName evidence="1">Succinyl-diaminopimelate desuccinylase</fullName>
        <shortName evidence="1">SDAP desuccinylase</shortName>
        <ecNumber evidence="1">3.5.1.18</ecNumber>
    </recommendedName>
    <alternativeName>
        <fullName evidence="1">N-succinyl-LL-2,6-diaminoheptanedioate amidohydrolase</fullName>
    </alternativeName>
</protein>
<keyword id="KW-0028">Amino-acid biosynthesis</keyword>
<keyword id="KW-0170">Cobalt</keyword>
<keyword id="KW-0220">Diaminopimelate biosynthesis</keyword>
<keyword id="KW-0378">Hydrolase</keyword>
<keyword id="KW-0457">Lysine biosynthesis</keyword>
<keyword id="KW-0479">Metal-binding</keyword>
<keyword id="KW-1185">Reference proteome</keyword>
<keyword id="KW-0862">Zinc</keyword>
<accession>Q9CM22</accession>
<gene>
    <name evidence="1" type="primary">dapE</name>
    <name type="ordered locus">PM1022</name>
</gene>
<sequence length="378" mass="41591">MKNSIIELARELIRRPSISPDDQGCQQIIAERLERLGFQIEWLPFNDTLNLWAKHGSGSPVIAFAGHTDVVPVGDTTQWQYPPFSAQLVDNVLYGRGAADMKGSLAAMVVAAEHYVKANPEHSGTVALLITSDEEAAAKDGTVRVVETLMARGEPIDYCIVGEPSSAQQFGDIVKNGRRGSITANLYIQGIQGHVAYPHLAQNPVHKALGFLTELTTYQWDNGNDFFPPTSLQIANIQAGTGSNNVIPGELYVQFNLRYCTEVTDDIIKKKVAEMLAKHQLNYRIEWHLSGKPFLTAKGKLVDTLLDVVEKITQNRPHLDTGGGTSDARFIALMGAEVVEFGPLNKTIHKVDECVNVDDLAKCGEVYQHVLCNMLERV</sequence>
<name>DAPE_PASMU</name>
<comment type="function">
    <text evidence="1">Catalyzes the hydrolysis of N-succinyl-L,L-diaminopimelic acid (SDAP), forming succinate and LL-2,6-diaminopimelate (DAP), an intermediate involved in the bacterial biosynthesis of lysine and meso-diaminopimelic acid, an essential component of bacterial cell walls.</text>
</comment>
<comment type="catalytic activity">
    <reaction evidence="1">
        <text>N-succinyl-(2S,6S)-2,6-diaminopimelate + H2O = (2S,6S)-2,6-diaminopimelate + succinate</text>
        <dbReference type="Rhea" id="RHEA:22608"/>
        <dbReference type="ChEBI" id="CHEBI:15377"/>
        <dbReference type="ChEBI" id="CHEBI:30031"/>
        <dbReference type="ChEBI" id="CHEBI:57609"/>
        <dbReference type="ChEBI" id="CHEBI:58087"/>
        <dbReference type="EC" id="3.5.1.18"/>
    </reaction>
</comment>
<comment type="cofactor">
    <cofactor evidence="1">
        <name>Zn(2+)</name>
        <dbReference type="ChEBI" id="CHEBI:29105"/>
    </cofactor>
    <cofactor evidence="1">
        <name>Co(2+)</name>
        <dbReference type="ChEBI" id="CHEBI:48828"/>
    </cofactor>
    <text evidence="1">Binds 2 Zn(2+) or Co(2+) ions per subunit.</text>
</comment>
<comment type="pathway">
    <text evidence="1">Amino-acid biosynthesis; L-lysine biosynthesis via DAP pathway; LL-2,6-diaminopimelate from (S)-tetrahydrodipicolinate (succinylase route): step 3/3.</text>
</comment>
<comment type="subunit">
    <text evidence="1">Homodimer.</text>
</comment>
<comment type="similarity">
    <text evidence="1">Belongs to the peptidase M20A family. DapE subfamily.</text>
</comment>
<reference key="1">
    <citation type="journal article" date="2001" name="Proc. Natl. Acad. Sci. U.S.A.">
        <title>Complete genomic sequence of Pasteurella multocida Pm70.</title>
        <authorList>
            <person name="May B.J."/>
            <person name="Zhang Q."/>
            <person name="Li L.L."/>
            <person name="Paustian M.L."/>
            <person name="Whittam T.S."/>
            <person name="Kapur V."/>
        </authorList>
    </citation>
    <scope>NUCLEOTIDE SEQUENCE [LARGE SCALE GENOMIC DNA]</scope>
    <source>
        <strain>Pm70</strain>
    </source>
</reference>
<proteinExistence type="inferred from homology"/>
<feature type="chain" id="PRO_0000375641" description="Succinyl-diaminopimelate desuccinylase">
    <location>
        <begin position="1"/>
        <end position="378"/>
    </location>
</feature>
<feature type="active site" evidence="1">
    <location>
        <position position="69"/>
    </location>
</feature>
<feature type="active site" description="Proton acceptor" evidence="1">
    <location>
        <position position="134"/>
    </location>
</feature>
<feature type="binding site" evidence="1">
    <location>
        <position position="67"/>
    </location>
    <ligand>
        <name>Zn(2+)</name>
        <dbReference type="ChEBI" id="CHEBI:29105"/>
        <label>1</label>
    </ligand>
</feature>
<feature type="binding site" evidence="1">
    <location>
        <position position="100"/>
    </location>
    <ligand>
        <name>Zn(2+)</name>
        <dbReference type="ChEBI" id="CHEBI:29105"/>
        <label>1</label>
    </ligand>
</feature>
<feature type="binding site" evidence="1">
    <location>
        <position position="100"/>
    </location>
    <ligand>
        <name>Zn(2+)</name>
        <dbReference type="ChEBI" id="CHEBI:29105"/>
        <label>2</label>
    </ligand>
</feature>
<feature type="binding site" evidence="1">
    <location>
        <position position="135"/>
    </location>
    <ligand>
        <name>Zn(2+)</name>
        <dbReference type="ChEBI" id="CHEBI:29105"/>
        <label>2</label>
    </ligand>
</feature>
<feature type="binding site" evidence="1">
    <location>
        <position position="163"/>
    </location>
    <ligand>
        <name>Zn(2+)</name>
        <dbReference type="ChEBI" id="CHEBI:29105"/>
        <label>1</label>
    </ligand>
</feature>
<feature type="binding site" evidence="1">
    <location>
        <position position="349"/>
    </location>
    <ligand>
        <name>Zn(2+)</name>
        <dbReference type="ChEBI" id="CHEBI:29105"/>
        <label>2</label>
    </ligand>
</feature>